<reference key="1">
    <citation type="submission" date="2004-11" db="EMBL/GenBank/DDBJ databases">
        <authorList>
            <consortium name="The German cDNA consortium"/>
        </authorList>
    </citation>
    <scope>NUCLEOTIDE SEQUENCE [LARGE SCALE MRNA]</scope>
    <source>
        <tissue>Brain cortex</tissue>
    </source>
</reference>
<keyword id="KW-0963">Cytoplasm</keyword>
<keyword id="KW-0396">Initiation factor</keyword>
<keyword id="KW-0648">Protein biosynthesis</keyword>
<keyword id="KW-1185">Reference proteome</keyword>
<keyword id="KW-0694">RNA-binding</keyword>
<keyword id="KW-0820">tRNA-binding</keyword>
<sequence length="144" mass="16460">MPKNKGKGGKNRRRGKNENESEKRELVFKEDGQEYAQVIKMLGNGRLEAMCFDGVKRLCHIRGKLRKKVWINTSDIILVGLRDYQDNKADVILKYNADEARSLKAYGELPEHAKINETDTFGPGDDDEIQFDDIGDDDEDIDDI</sequence>
<feature type="chain" id="PRO_0000145104" description="Eukaryotic translation initiation factor 1A, X-chromosomal">
    <location>
        <begin position="1"/>
        <end position="144"/>
    </location>
</feature>
<feature type="domain" description="S1-like">
    <location>
        <begin position="22"/>
        <end position="96"/>
    </location>
</feature>
<feature type="region of interest" description="Disordered" evidence="2">
    <location>
        <begin position="1"/>
        <end position="26"/>
    </location>
</feature>
<feature type="region of interest" description="Disordered" evidence="2">
    <location>
        <begin position="114"/>
        <end position="144"/>
    </location>
</feature>
<feature type="compositionally biased region" description="Basic residues" evidence="2">
    <location>
        <begin position="1"/>
        <end position="15"/>
    </location>
</feature>
<feature type="compositionally biased region" description="Basic and acidic residues" evidence="2">
    <location>
        <begin position="16"/>
        <end position="26"/>
    </location>
</feature>
<feature type="compositionally biased region" description="Acidic residues" evidence="2">
    <location>
        <begin position="124"/>
        <end position="144"/>
    </location>
</feature>
<protein>
    <recommendedName>
        <fullName>Eukaryotic translation initiation factor 1A, X-chromosomal</fullName>
        <shortName>eIF-1A X isoform</shortName>
        <shortName>eIF1A X isoform</shortName>
    </recommendedName>
    <alternativeName>
        <fullName>Eukaryotic translation initiation factor 4C</fullName>
        <shortName>eIF-4C</shortName>
    </alternativeName>
</protein>
<comment type="function">
    <text evidence="1">Component of the 43S pre-initiation complex (43S PIC), which binds to the mRNA cap-proximal region, scans mRNA 5'-untranslated region, and locates the initiation codon. This protein enhances formation of the cap-proximal complex. Together with EIF1, facilitates scanning, start codon recognition, promotion of the assembly of 48S complex at the initiation codon (43S PIC becomes 48S PIC after the start codon is reached), and dissociation of aberrant complexes. After start codon location, together with EIF5B orients the initiator methionine-tRNA in a conformation that allows 60S ribosomal subunit joining to form the 80S initiation complex. Is released after 80S initiation complex formation, just after GTP hydrolysis by EIF5B, and before release of EIF5B. Its globular part is located in the A site of the 40S ribosomal subunit. Its interaction with EIF5 during scanning contribute to the maintenance of EIF1 within the open 43S PIC. In contrast to yeast orthologs, does not bind EIF1.</text>
</comment>
<comment type="subunit">
    <text evidence="1">Component of the 43S pre-initiation complex (43S PIC), which is composed of the 40S ribosomal subunit, EIF1, eIF1A (EIF1AX), eIF3 complex, EIF5 and eIF2-GTP-initiator tRNA complex (eIF2 ternary complex). Interacts with EIF5; this interaction contributes to the maintenance of EIF1 within the open 43S PIC. Interacts through its C-terminal domain (CTD) with the CTD of EIF5B; from the location of the start codon by the 43S complex until the formation of the 80S complex.</text>
</comment>
<comment type="subcellular location">
    <subcellularLocation>
        <location evidence="3">Cytoplasm</location>
    </subcellularLocation>
</comment>
<comment type="similarity">
    <text evidence="3">Belongs to the eIF-1A family.</text>
</comment>
<name>IF1AX_PONAB</name>
<organism>
    <name type="scientific">Pongo abelii</name>
    <name type="common">Sumatran orangutan</name>
    <name type="synonym">Pongo pygmaeus abelii</name>
    <dbReference type="NCBI Taxonomy" id="9601"/>
    <lineage>
        <taxon>Eukaryota</taxon>
        <taxon>Metazoa</taxon>
        <taxon>Chordata</taxon>
        <taxon>Craniata</taxon>
        <taxon>Vertebrata</taxon>
        <taxon>Euteleostomi</taxon>
        <taxon>Mammalia</taxon>
        <taxon>Eutheria</taxon>
        <taxon>Euarchontoglires</taxon>
        <taxon>Primates</taxon>
        <taxon>Haplorrhini</taxon>
        <taxon>Catarrhini</taxon>
        <taxon>Hominidae</taxon>
        <taxon>Pongo</taxon>
    </lineage>
</organism>
<dbReference type="EMBL" id="CR859179">
    <property type="protein sequence ID" value="CAH91368.1"/>
    <property type="molecule type" value="mRNA"/>
</dbReference>
<dbReference type="RefSeq" id="NP_001125807.1">
    <property type="nucleotide sequence ID" value="NM_001132335.1"/>
</dbReference>
<dbReference type="BMRB" id="Q5RA42"/>
<dbReference type="SMR" id="Q5RA42"/>
<dbReference type="FunCoup" id="Q5RA42">
    <property type="interactions" value="1737"/>
</dbReference>
<dbReference type="STRING" id="9601.ENSPPYP00000022574"/>
<dbReference type="Ensembl" id="ENSPPYT00000042325.1">
    <property type="protein sequence ID" value="ENSPPYP00000029438.1"/>
    <property type="gene ID" value="ENSPPYG00000038921.1"/>
</dbReference>
<dbReference type="GeneID" id="100172735"/>
<dbReference type="KEGG" id="pon:100172735"/>
<dbReference type="CTD" id="1964"/>
<dbReference type="eggNOG" id="KOG3403">
    <property type="taxonomic scope" value="Eukaryota"/>
</dbReference>
<dbReference type="GeneTree" id="ENSGT00390000008256"/>
<dbReference type="HOGENOM" id="CLU_109098_0_1_1"/>
<dbReference type="InParanoid" id="Q5RA42"/>
<dbReference type="OrthoDB" id="274995at2759"/>
<dbReference type="TreeFam" id="TF350394"/>
<dbReference type="Proteomes" id="UP000001595">
    <property type="component" value="Chromosome X"/>
</dbReference>
<dbReference type="GO" id="GO:0005737">
    <property type="term" value="C:cytoplasm"/>
    <property type="evidence" value="ECO:0007669"/>
    <property type="project" value="UniProtKB-SubCell"/>
</dbReference>
<dbReference type="GO" id="GO:0003743">
    <property type="term" value="F:translation initiation factor activity"/>
    <property type="evidence" value="ECO:0007669"/>
    <property type="project" value="UniProtKB-KW"/>
</dbReference>
<dbReference type="GO" id="GO:0000049">
    <property type="term" value="F:tRNA binding"/>
    <property type="evidence" value="ECO:0007669"/>
    <property type="project" value="UniProtKB-KW"/>
</dbReference>
<dbReference type="CDD" id="cd05793">
    <property type="entry name" value="S1_IF1A"/>
    <property type="match status" value="1"/>
</dbReference>
<dbReference type="FunFam" id="2.40.50.140:FF:000071">
    <property type="entry name" value="Eukaryotic translation initiation factor 1A"/>
    <property type="match status" value="1"/>
</dbReference>
<dbReference type="Gene3D" id="2.40.50.140">
    <property type="entry name" value="Nucleic acid-binding proteins"/>
    <property type="match status" value="1"/>
</dbReference>
<dbReference type="HAMAP" id="MF_00216">
    <property type="entry name" value="aIF_1A"/>
    <property type="match status" value="1"/>
</dbReference>
<dbReference type="InterPro" id="IPR012340">
    <property type="entry name" value="NA-bd_OB-fold"/>
</dbReference>
<dbReference type="InterPro" id="IPR006196">
    <property type="entry name" value="RNA-binding_domain_S1_IF1"/>
</dbReference>
<dbReference type="InterPro" id="IPR001253">
    <property type="entry name" value="TIF_eIF-1A"/>
</dbReference>
<dbReference type="InterPro" id="IPR018104">
    <property type="entry name" value="TIF_eIF-1A_CS"/>
</dbReference>
<dbReference type="NCBIfam" id="TIGR00523">
    <property type="entry name" value="eIF-1A"/>
    <property type="match status" value="1"/>
</dbReference>
<dbReference type="PANTHER" id="PTHR21668">
    <property type="entry name" value="EIF-1A"/>
    <property type="match status" value="1"/>
</dbReference>
<dbReference type="Pfam" id="PF01176">
    <property type="entry name" value="eIF-1a"/>
    <property type="match status" value="1"/>
</dbReference>
<dbReference type="SMART" id="SM00652">
    <property type="entry name" value="eIF1a"/>
    <property type="match status" value="1"/>
</dbReference>
<dbReference type="SUPFAM" id="SSF50249">
    <property type="entry name" value="Nucleic acid-binding proteins"/>
    <property type="match status" value="1"/>
</dbReference>
<dbReference type="PROSITE" id="PS01262">
    <property type="entry name" value="IF1A"/>
    <property type="match status" value="1"/>
</dbReference>
<dbReference type="PROSITE" id="PS50832">
    <property type="entry name" value="S1_IF1_TYPE"/>
    <property type="match status" value="1"/>
</dbReference>
<gene>
    <name type="primary">EIF1AX</name>
</gene>
<proteinExistence type="evidence at transcript level"/>
<accession>Q5RA42</accession>
<evidence type="ECO:0000250" key="1">
    <source>
        <dbReference type="UniProtKB" id="P47813"/>
    </source>
</evidence>
<evidence type="ECO:0000256" key="2">
    <source>
        <dbReference type="SAM" id="MobiDB-lite"/>
    </source>
</evidence>
<evidence type="ECO:0000305" key="3"/>